<evidence type="ECO:0000250" key="1"/>
<evidence type="ECO:0000250" key="2">
    <source>
        <dbReference type="UniProtKB" id="P43286"/>
    </source>
</evidence>
<evidence type="ECO:0000250" key="3">
    <source>
        <dbReference type="UniProtKB" id="P61837"/>
    </source>
</evidence>
<evidence type="ECO:0000255" key="4"/>
<evidence type="ECO:0000256" key="5">
    <source>
        <dbReference type="SAM" id="MobiDB-lite"/>
    </source>
</evidence>
<evidence type="ECO:0000269" key="6">
    <source>
    </source>
</evidence>
<evidence type="ECO:0000305" key="7"/>
<feature type="chain" id="PRO_0000064055" description="Probable aquaporin PIP2-5">
    <location>
        <begin position="1"/>
        <end position="286"/>
    </location>
</feature>
<feature type="topological domain" description="Cytoplasmic" evidence="4">
    <location>
        <begin position="1"/>
        <end position="38"/>
    </location>
</feature>
<feature type="transmembrane region" description="Helical; Name=1" evidence="4">
    <location>
        <begin position="39"/>
        <end position="59"/>
    </location>
</feature>
<feature type="topological domain" description="Extracellular" evidence="4">
    <location>
        <begin position="60"/>
        <end position="75"/>
    </location>
</feature>
<feature type="transmembrane region" description="Helical; Name=2" evidence="4">
    <location>
        <begin position="76"/>
        <end position="96"/>
    </location>
</feature>
<feature type="topological domain" description="Cytoplasmic" evidence="4">
    <location>
        <begin position="97"/>
        <end position="124"/>
    </location>
</feature>
<feature type="transmembrane region" description="Helical; Name=3" evidence="4">
    <location>
        <begin position="125"/>
        <end position="145"/>
    </location>
</feature>
<feature type="topological domain" description="Extracellular" evidence="4">
    <location>
        <begin position="146"/>
        <end position="165"/>
    </location>
</feature>
<feature type="transmembrane region" description="Helical; Name=4" evidence="4">
    <location>
        <begin position="166"/>
        <end position="186"/>
    </location>
</feature>
<feature type="topological domain" description="Cytoplasmic" evidence="4">
    <location>
        <begin position="187"/>
        <end position="200"/>
    </location>
</feature>
<feature type="transmembrane region" description="Helical; Name=5" evidence="4">
    <location>
        <begin position="201"/>
        <end position="221"/>
    </location>
</feature>
<feature type="topological domain" description="Extracellular" evidence="4">
    <location>
        <begin position="222"/>
        <end position="248"/>
    </location>
</feature>
<feature type="transmembrane region" description="Helical; Name=6" evidence="4">
    <location>
        <begin position="249"/>
        <end position="269"/>
    </location>
</feature>
<feature type="topological domain" description="Cytoplasmic" evidence="4">
    <location>
        <begin position="270"/>
        <end position="286"/>
    </location>
</feature>
<feature type="region of interest" description="Disordered" evidence="5">
    <location>
        <begin position="1"/>
        <end position="23"/>
    </location>
</feature>
<feature type="short sequence motif" description="NPA 1">
    <location>
        <begin position="106"/>
        <end position="108"/>
    </location>
</feature>
<feature type="short sequence motif" description="NPA 2">
    <location>
        <begin position="227"/>
        <end position="229"/>
    </location>
</feature>
<feature type="compositionally biased region" description="Basic and acidic residues" evidence="5">
    <location>
        <begin position="1"/>
        <end position="18"/>
    </location>
</feature>
<feature type="modified residue" description="N-acetylmethionine" evidence="3">
    <location>
        <position position="1"/>
    </location>
</feature>
<feature type="modified residue" description="N6,N6-dimethyllysine" evidence="2">
    <location>
        <position position="3"/>
    </location>
</feature>
<feature type="modified residue" description="Phosphoserine" evidence="2">
    <location>
        <position position="279"/>
    </location>
</feature>
<feature type="modified residue" description="Phosphoserine" evidence="2">
    <location>
        <position position="282"/>
    </location>
</feature>
<accession>Q9SV31</accession>
<protein>
    <recommendedName>
        <fullName>Probable aquaporin PIP2-5</fullName>
    </recommendedName>
    <alternativeName>
        <fullName>Plasma membrane intrinsic protein 2-5</fullName>
        <shortName>AtPIP2;5</shortName>
    </alternativeName>
    <alternativeName>
        <fullName>Plasma membrane intrinsic protein 2d</fullName>
        <shortName>PIP2d</shortName>
    </alternativeName>
</protein>
<dbReference type="EMBL" id="AL049655">
    <property type="protein sequence ID" value="CAB41102.1"/>
    <property type="molecule type" value="Genomic_DNA"/>
</dbReference>
<dbReference type="EMBL" id="CP002686">
    <property type="protein sequence ID" value="AEE79295.1"/>
    <property type="molecule type" value="Genomic_DNA"/>
</dbReference>
<dbReference type="EMBL" id="AF370351">
    <property type="protein sequence ID" value="AAK44166.1"/>
    <property type="molecule type" value="mRNA"/>
</dbReference>
<dbReference type="EMBL" id="AY062981">
    <property type="protein sequence ID" value="AAL34155.1"/>
    <property type="molecule type" value="mRNA"/>
</dbReference>
<dbReference type="EMBL" id="BT000670">
    <property type="protein sequence ID" value="AAN31817.1"/>
    <property type="molecule type" value="mRNA"/>
</dbReference>
<dbReference type="EMBL" id="AY084843">
    <property type="protein sequence ID" value="AAM61408.1"/>
    <property type="molecule type" value="mRNA"/>
</dbReference>
<dbReference type="PIR" id="T06738">
    <property type="entry name" value="T06738"/>
</dbReference>
<dbReference type="RefSeq" id="NP_191042.1">
    <property type="nucleotide sequence ID" value="NM_115339.3"/>
</dbReference>
<dbReference type="SMR" id="Q9SV31"/>
<dbReference type="BioGRID" id="9963">
    <property type="interactions" value="13"/>
</dbReference>
<dbReference type="FunCoup" id="Q9SV31">
    <property type="interactions" value="207"/>
</dbReference>
<dbReference type="IntAct" id="Q9SV31">
    <property type="interactions" value="11"/>
</dbReference>
<dbReference type="STRING" id="3702.Q9SV31"/>
<dbReference type="iPTMnet" id="Q9SV31"/>
<dbReference type="PaxDb" id="3702-AT3G54820.1"/>
<dbReference type="ProteomicsDB" id="235023"/>
<dbReference type="EnsemblPlants" id="AT3G54820.1">
    <property type="protein sequence ID" value="AT3G54820.1"/>
    <property type="gene ID" value="AT3G54820"/>
</dbReference>
<dbReference type="GeneID" id="824647"/>
<dbReference type="Gramene" id="AT3G54820.1">
    <property type="protein sequence ID" value="AT3G54820.1"/>
    <property type="gene ID" value="AT3G54820"/>
</dbReference>
<dbReference type="KEGG" id="ath:AT3G54820"/>
<dbReference type="Araport" id="AT3G54820"/>
<dbReference type="TAIR" id="AT3G54820">
    <property type="gene designation" value="PIP2"/>
</dbReference>
<dbReference type="eggNOG" id="KOG0223">
    <property type="taxonomic scope" value="Eukaryota"/>
</dbReference>
<dbReference type="HOGENOM" id="CLU_020019_3_0_1"/>
<dbReference type="InParanoid" id="Q9SV31"/>
<dbReference type="OMA" id="FVHATAH"/>
<dbReference type="OrthoDB" id="3222at2759"/>
<dbReference type="PhylomeDB" id="Q9SV31"/>
<dbReference type="PRO" id="PR:Q9SV31"/>
<dbReference type="Proteomes" id="UP000006548">
    <property type="component" value="Chromosome 3"/>
</dbReference>
<dbReference type="ExpressionAtlas" id="Q9SV31">
    <property type="expression patterns" value="baseline and differential"/>
</dbReference>
<dbReference type="GO" id="GO:0005886">
    <property type="term" value="C:plasma membrane"/>
    <property type="evidence" value="ECO:0007669"/>
    <property type="project" value="UniProtKB-SubCell"/>
</dbReference>
<dbReference type="GO" id="GO:0015250">
    <property type="term" value="F:water channel activity"/>
    <property type="evidence" value="ECO:0000250"/>
    <property type="project" value="TAIR"/>
</dbReference>
<dbReference type="GO" id="GO:0006833">
    <property type="term" value="P:water transport"/>
    <property type="evidence" value="ECO:0000315"/>
    <property type="project" value="TAIR"/>
</dbReference>
<dbReference type="CDD" id="cd00333">
    <property type="entry name" value="MIP"/>
    <property type="match status" value="1"/>
</dbReference>
<dbReference type="FunFam" id="1.20.1080.10:FF:000001">
    <property type="entry name" value="Probable aquaporin PIP1-2"/>
    <property type="match status" value="1"/>
</dbReference>
<dbReference type="Gene3D" id="1.20.1080.10">
    <property type="entry name" value="Glycerol uptake facilitator protein"/>
    <property type="match status" value="1"/>
</dbReference>
<dbReference type="InterPro" id="IPR023271">
    <property type="entry name" value="Aquaporin-like"/>
</dbReference>
<dbReference type="InterPro" id="IPR034294">
    <property type="entry name" value="Aquaporin_transptr"/>
</dbReference>
<dbReference type="InterPro" id="IPR000425">
    <property type="entry name" value="MIP"/>
</dbReference>
<dbReference type="InterPro" id="IPR022357">
    <property type="entry name" value="MIP_CS"/>
</dbReference>
<dbReference type="NCBIfam" id="TIGR00861">
    <property type="entry name" value="MIP"/>
    <property type="match status" value="1"/>
</dbReference>
<dbReference type="PANTHER" id="PTHR45687">
    <property type="entry name" value="AQUAPORIN OR AQUAGLYCEROPORIN RELATED"/>
    <property type="match status" value="1"/>
</dbReference>
<dbReference type="Pfam" id="PF00230">
    <property type="entry name" value="MIP"/>
    <property type="match status" value="1"/>
</dbReference>
<dbReference type="PRINTS" id="PR00783">
    <property type="entry name" value="MINTRINSICP"/>
</dbReference>
<dbReference type="SUPFAM" id="SSF81338">
    <property type="entry name" value="Aquaporin-like"/>
    <property type="match status" value="1"/>
</dbReference>
<dbReference type="PROSITE" id="PS00221">
    <property type="entry name" value="MIP"/>
    <property type="match status" value="1"/>
</dbReference>
<reference key="1">
    <citation type="journal article" date="2000" name="Nature">
        <title>Sequence and analysis of chromosome 3 of the plant Arabidopsis thaliana.</title>
        <authorList>
            <person name="Salanoubat M."/>
            <person name="Lemcke K."/>
            <person name="Rieger M."/>
            <person name="Ansorge W."/>
            <person name="Unseld M."/>
            <person name="Fartmann B."/>
            <person name="Valle G."/>
            <person name="Bloecker H."/>
            <person name="Perez-Alonso M."/>
            <person name="Obermaier B."/>
            <person name="Delseny M."/>
            <person name="Boutry M."/>
            <person name="Grivell L.A."/>
            <person name="Mache R."/>
            <person name="Puigdomenech P."/>
            <person name="De Simone V."/>
            <person name="Choisne N."/>
            <person name="Artiguenave F."/>
            <person name="Robert C."/>
            <person name="Brottier P."/>
            <person name="Wincker P."/>
            <person name="Cattolico L."/>
            <person name="Weissenbach J."/>
            <person name="Saurin W."/>
            <person name="Quetier F."/>
            <person name="Schaefer M."/>
            <person name="Mueller-Auer S."/>
            <person name="Gabel C."/>
            <person name="Fuchs M."/>
            <person name="Benes V."/>
            <person name="Wurmbach E."/>
            <person name="Drzonek H."/>
            <person name="Erfle H."/>
            <person name="Jordan N."/>
            <person name="Bangert S."/>
            <person name="Wiedelmann R."/>
            <person name="Kranz H."/>
            <person name="Voss H."/>
            <person name="Holland R."/>
            <person name="Brandt P."/>
            <person name="Nyakatura G."/>
            <person name="Vezzi A."/>
            <person name="D'Angelo M."/>
            <person name="Pallavicini A."/>
            <person name="Toppo S."/>
            <person name="Simionati B."/>
            <person name="Conrad A."/>
            <person name="Hornischer K."/>
            <person name="Kauer G."/>
            <person name="Loehnert T.-H."/>
            <person name="Nordsiek G."/>
            <person name="Reichelt J."/>
            <person name="Scharfe M."/>
            <person name="Schoen O."/>
            <person name="Bargues M."/>
            <person name="Terol J."/>
            <person name="Climent J."/>
            <person name="Navarro P."/>
            <person name="Collado C."/>
            <person name="Perez-Perez A."/>
            <person name="Ottenwaelder B."/>
            <person name="Duchemin D."/>
            <person name="Cooke R."/>
            <person name="Laudie M."/>
            <person name="Berger-Llauro C."/>
            <person name="Purnelle B."/>
            <person name="Masuy D."/>
            <person name="de Haan M."/>
            <person name="Maarse A.C."/>
            <person name="Alcaraz J.-P."/>
            <person name="Cottet A."/>
            <person name="Casacuberta E."/>
            <person name="Monfort A."/>
            <person name="Argiriou A."/>
            <person name="Flores M."/>
            <person name="Liguori R."/>
            <person name="Vitale D."/>
            <person name="Mannhaupt G."/>
            <person name="Haase D."/>
            <person name="Schoof H."/>
            <person name="Rudd S."/>
            <person name="Zaccaria P."/>
            <person name="Mewes H.-W."/>
            <person name="Mayer K.F.X."/>
            <person name="Kaul S."/>
            <person name="Town C.D."/>
            <person name="Koo H.L."/>
            <person name="Tallon L.J."/>
            <person name="Jenkins J."/>
            <person name="Rooney T."/>
            <person name="Rizzo M."/>
            <person name="Walts A."/>
            <person name="Utterback T."/>
            <person name="Fujii C.Y."/>
            <person name="Shea T.P."/>
            <person name="Creasy T.H."/>
            <person name="Haas B."/>
            <person name="Maiti R."/>
            <person name="Wu D."/>
            <person name="Peterson J."/>
            <person name="Van Aken S."/>
            <person name="Pai G."/>
            <person name="Militscher J."/>
            <person name="Sellers P."/>
            <person name="Gill J.E."/>
            <person name="Feldblyum T.V."/>
            <person name="Preuss D."/>
            <person name="Lin X."/>
            <person name="Nierman W.C."/>
            <person name="Salzberg S.L."/>
            <person name="White O."/>
            <person name="Venter J.C."/>
            <person name="Fraser C.M."/>
            <person name="Kaneko T."/>
            <person name="Nakamura Y."/>
            <person name="Sato S."/>
            <person name="Kato T."/>
            <person name="Asamizu E."/>
            <person name="Sasamoto S."/>
            <person name="Kimura T."/>
            <person name="Idesawa K."/>
            <person name="Kawashima K."/>
            <person name="Kishida Y."/>
            <person name="Kiyokawa C."/>
            <person name="Kohara M."/>
            <person name="Matsumoto M."/>
            <person name="Matsuno A."/>
            <person name="Muraki A."/>
            <person name="Nakayama S."/>
            <person name="Nakazaki N."/>
            <person name="Shinpo S."/>
            <person name="Takeuchi C."/>
            <person name="Wada T."/>
            <person name="Watanabe A."/>
            <person name="Yamada M."/>
            <person name="Yasuda M."/>
            <person name="Tabata S."/>
        </authorList>
    </citation>
    <scope>NUCLEOTIDE SEQUENCE [LARGE SCALE GENOMIC DNA]</scope>
    <source>
        <strain>cv. Columbia</strain>
    </source>
</reference>
<reference key="2">
    <citation type="journal article" date="2017" name="Plant J.">
        <title>Araport11: a complete reannotation of the Arabidopsis thaliana reference genome.</title>
        <authorList>
            <person name="Cheng C.Y."/>
            <person name="Krishnakumar V."/>
            <person name="Chan A.P."/>
            <person name="Thibaud-Nissen F."/>
            <person name="Schobel S."/>
            <person name="Town C.D."/>
        </authorList>
    </citation>
    <scope>GENOME REANNOTATION</scope>
    <source>
        <strain>cv. Columbia</strain>
    </source>
</reference>
<reference key="3">
    <citation type="journal article" date="2003" name="Science">
        <title>Empirical analysis of transcriptional activity in the Arabidopsis genome.</title>
        <authorList>
            <person name="Yamada K."/>
            <person name="Lim J."/>
            <person name="Dale J.M."/>
            <person name="Chen H."/>
            <person name="Shinn P."/>
            <person name="Palm C.J."/>
            <person name="Southwick A.M."/>
            <person name="Wu H.C."/>
            <person name="Kim C.J."/>
            <person name="Nguyen M."/>
            <person name="Pham P.K."/>
            <person name="Cheuk R.F."/>
            <person name="Karlin-Newmann G."/>
            <person name="Liu S.X."/>
            <person name="Lam B."/>
            <person name="Sakano H."/>
            <person name="Wu T."/>
            <person name="Yu G."/>
            <person name="Miranda M."/>
            <person name="Quach H.L."/>
            <person name="Tripp M."/>
            <person name="Chang C.H."/>
            <person name="Lee J.M."/>
            <person name="Toriumi M.J."/>
            <person name="Chan M.M."/>
            <person name="Tang C.C."/>
            <person name="Onodera C.S."/>
            <person name="Deng J.M."/>
            <person name="Akiyama K."/>
            <person name="Ansari Y."/>
            <person name="Arakawa T."/>
            <person name="Banh J."/>
            <person name="Banno F."/>
            <person name="Bowser L."/>
            <person name="Brooks S.Y."/>
            <person name="Carninci P."/>
            <person name="Chao Q."/>
            <person name="Choy N."/>
            <person name="Enju A."/>
            <person name="Goldsmith A.D."/>
            <person name="Gurjal M."/>
            <person name="Hansen N.F."/>
            <person name="Hayashizaki Y."/>
            <person name="Johnson-Hopson C."/>
            <person name="Hsuan V.W."/>
            <person name="Iida K."/>
            <person name="Karnes M."/>
            <person name="Khan S."/>
            <person name="Koesema E."/>
            <person name="Ishida J."/>
            <person name="Jiang P.X."/>
            <person name="Jones T."/>
            <person name="Kawai J."/>
            <person name="Kamiya A."/>
            <person name="Meyers C."/>
            <person name="Nakajima M."/>
            <person name="Narusaka M."/>
            <person name="Seki M."/>
            <person name="Sakurai T."/>
            <person name="Satou M."/>
            <person name="Tamse R."/>
            <person name="Vaysberg M."/>
            <person name="Wallender E.K."/>
            <person name="Wong C."/>
            <person name="Yamamura Y."/>
            <person name="Yuan S."/>
            <person name="Shinozaki K."/>
            <person name="Davis R.W."/>
            <person name="Theologis A."/>
            <person name="Ecker J.R."/>
        </authorList>
    </citation>
    <scope>NUCLEOTIDE SEQUENCE [LARGE SCALE MRNA]</scope>
    <source>
        <strain>cv. Columbia</strain>
    </source>
</reference>
<reference key="4">
    <citation type="submission" date="2002-03" db="EMBL/GenBank/DDBJ databases">
        <title>Full-length cDNA from Arabidopsis thaliana.</title>
        <authorList>
            <person name="Brover V.V."/>
            <person name="Troukhan M.E."/>
            <person name="Alexandrov N.A."/>
            <person name="Lu Y.-P."/>
            <person name="Flavell R.B."/>
            <person name="Feldmann K.A."/>
        </authorList>
    </citation>
    <scope>NUCLEOTIDE SEQUENCE [LARGE SCALE MRNA]</scope>
</reference>
<reference key="5">
    <citation type="journal article" date="2002" name="Genome Biol.">
        <title>From genome to function: the Arabidopsis aquaporins.</title>
        <authorList>
            <person name="Quigley F."/>
            <person name="Rosenberg J.M."/>
            <person name="Shachar-Hill Y."/>
            <person name="Bohnert H.J."/>
        </authorList>
    </citation>
    <scope>NOMENCLATURE</scope>
    <scope>TISSUE SPECIFICITY</scope>
</reference>
<sequence length="286" mass="30590">MTKEVVGDKRSFSGKDYQDPPPEPLFDATELGKWSFYRALIAEFIATLLFLYVTIMTVIGYKSQTDPALNPDQCTGVGVLGIAWAFGGMIFILVYCTAGISGGHINPAVTFGLLLARKVTLVRAVMYMVAQCLGAICGVALVKAFQSAYFTRYGGGANGLSDGYSIGTGVAAEIIGTFVLVYTVFSATDPKRSARDSHVPVLAPLPIGFAVFIVHLATIPITGTGINPARSLGAAIIYNKDKAWDHHWIFWVGPFAGAAIAAFYHQFVLRAGAIKALGSFRSQPHV</sequence>
<proteinExistence type="evidence at protein level"/>
<name>PIP25_ARATH</name>
<comment type="function">
    <text evidence="1">Aquaporins facilitate the transport of water and small neutral solutes across cell membranes.</text>
</comment>
<comment type="interaction">
    <interactant intactId="EBI-4425112">
        <id>Q9SV31</id>
    </interactant>
    <interactant intactId="EBI-4431134">
        <id>Q08733</id>
        <label>PIP1-3</label>
    </interactant>
    <organismsDiffer>false</organismsDiffer>
    <experiments>5</experiments>
</comment>
<comment type="interaction">
    <interactant intactId="EBI-4425112">
        <id>Q9SV31</id>
    </interactant>
    <interactant intactId="EBI-4427223">
        <id>Q39196</id>
        <label>PIP1.4</label>
    </interactant>
    <organismsDiffer>false</organismsDiffer>
    <experiments>4</experiments>
</comment>
<comment type="subcellular location">
    <subcellularLocation>
        <location evidence="1">Cell membrane</location>
        <topology evidence="1">Multi-pass membrane protein</topology>
    </subcellularLocation>
</comment>
<comment type="tissue specificity">
    <text evidence="6">Expressed in green siliques.</text>
</comment>
<comment type="domain">
    <text>Aquaporins contain two tandem repeats each containing three membrane-spanning domains and a pore-forming loop with the signature motif Asn-Pro-Ala (NPA).</text>
</comment>
<comment type="similarity">
    <text evidence="7">Belongs to the MIP/aquaporin (TC 1.A.8) family. PIP (TC 1.A.8.11) subfamily.</text>
</comment>
<keyword id="KW-0007">Acetylation</keyword>
<keyword id="KW-1003">Cell membrane</keyword>
<keyword id="KW-0472">Membrane</keyword>
<keyword id="KW-0488">Methylation</keyword>
<keyword id="KW-0597">Phosphoprotein</keyword>
<keyword id="KW-1185">Reference proteome</keyword>
<keyword id="KW-0677">Repeat</keyword>
<keyword id="KW-0812">Transmembrane</keyword>
<keyword id="KW-1133">Transmembrane helix</keyword>
<keyword id="KW-0813">Transport</keyword>
<organism>
    <name type="scientific">Arabidopsis thaliana</name>
    <name type="common">Mouse-ear cress</name>
    <dbReference type="NCBI Taxonomy" id="3702"/>
    <lineage>
        <taxon>Eukaryota</taxon>
        <taxon>Viridiplantae</taxon>
        <taxon>Streptophyta</taxon>
        <taxon>Embryophyta</taxon>
        <taxon>Tracheophyta</taxon>
        <taxon>Spermatophyta</taxon>
        <taxon>Magnoliopsida</taxon>
        <taxon>eudicotyledons</taxon>
        <taxon>Gunneridae</taxon>
        <taxon>Pentapetalae</taxon>
        <taxon>rosids</taxon>
        <taxon>malvids</taxon>
        <taxon>Brassicales</taxon>
        <taxon>Brassicaceae</taxon>
        <taxon>Camelineae</taxon>
        <taxon>Arabidopsis</taxon>
    </lineage>
</organism>
<gene>
    <name type="primary">PIP2-5</name>
    <name type="synonym">PIP2D</name>
    <name type="ordered locus">At3g54820</name>
    <name type="ORF">F28P10.200</name>
</gene>